<feature type="chain" id="PRO_0000054777" description="Sorbose reductase sou1">
    <location>
        <begin position="1"/>
        <end position="255"/>
    </location>
</feature>
<feature type="active site" description="Proton donor" evidence="3">
    <location>
        <position position="148"/>
    </location>
</feature>
<feature type="active site" description="Proton donor" evidence="3">
    <location>
        <position position="163"/>
    </location>
</feature>
<feature type="active site" description="Lowers pKa of active site Tyr" evidence="3">
    <location>
        <position position="167"/>
    </location>
</feature>
<feature type="binding site" evidence="2">
    <location>
        <position position="21"/>
    </location>
    <ligand>
        <name>NADP(+)</name>
        <dbReference type="ChEBI" id="CHEBI:58349"/>
    </ligand>
</feature>
<feature type="binding site" evidence="3">
    <location>
        <position position="95"/>
    </location>
    <ligand>
        <name>NADP(+)</name>
        <dbReference type="ChEBI" id="CHEBI:58349"/>
    </ligand>
</feature>
<feature type="binding site" evidence="3">
    <location>
        <position position="163"/>
    </location>
    <ligand>
        <name>NADP(+)</name>
        <dbReference type="ChEBI" id="CHEBI:58349"/>
    </ligand>
</feature>
<feature type="binding site" evidence="3">
    <location>
        <position position="167"/>
    </location>
    <ligand>
        <name>NADP(+)</name>
        <dbReference type="ChEBI" id="CHEBI:58349"/>
    </ligand>
</feature>
<feature type="binding site" evidence="3">
    <location>
        <position position="195"/>
    </location>
    <ligand>
        <name>NADP(+)</name>
        <dbReference type="ChEBI" id="CHEBI:58349"/>
    </ligand>
</feature>
<feature type="binding site" evidence="2">
    <location>
        <position position="197"/>
    </location>
    <ligand>
        <name>NADP(+)</name>
        <dbReference type="ChEBI" id="CHEBI:58349"/>
    </ligand>
</feature>
<keyword id="KW-0119">Carbohydrate metabolism</keyword>
<keyword id="KW-0521">NADP</keyword>
<keyword id="KW-0560">Oxidoreductase</keyword>
<keyword id="KW-1185">Reference proteome</keyword>
<protein>
    <recommendedName>
        <fullName>Sorbose reductase sou1</fullName>
        <ecNumber>1.1.1.289</ecNumber>
    </recommendedName>
    <alternativeName>
        <fullName>Sorbitol utilization protein sou1</fullName>
    </alternativeName>
</protein>
<reference key="1">
    <citation type="journal article" date="2002" name="Nature">
        <title>The genome sequence of Schizosaccharomyces pombe.</title>
        <authorList>
            <person name="Wood V."/>
            <person name="Gwilliam R."/>
            <person name="Rajandream M.A."/>
            <person name="Lyne M.H."/>
            <person name="Lyne R."/>
            <person name="Stewart A."/>
            <person name="Sgouros J.G."/>
            <person name="Peat N."/>
            <person name="Hayles J."/>
            <person name="Baker S.G."/>
            <person name="Basham D."/>
            <person name="Bowman S."/>
            <person name="Brooks K."/>
            <person name="Brown D."/>
            <person name="Brown S."/>
            <person name="Chillingworth T."/>
            <person name="Churcher C.M."/>
            <person name="Collins M."/>
            <person name="Connor R."/>
            <person name="Cronin A."/>
            <person name="Davis P."/>
            <person name="Feltwell T."/>
            <person name="Fraser A."/>
            <person name="Gentles S."/>
            <person name="Goble A."/>
            <person name="Hamlin N."/>
            <person name="Harris D.E."/>
            <person name="Hidalgo J."/>
            <person name="Hodgson G."/>
            <person name="Holroyd S."/>
            <person name="Hornsby T."/>
            <person name="Howarth S."/>
            <person name="Huckle E.J."/>
            <person name="Hunt S."/>
            <person name="Jagels K."/>
            <person name="James K.D."/>
            <person name="Jones L."/>
            <person name="Jones M."/>
            <person name="Leather S."/>
            <person name="McDonald S."/>
            <person name="McLean J."/>
            <person name="Mooney P."/>
            <person name="Moule S."/>
            <person name="Mungall K.L."/>
            <person name="Murphy L.D."/>
            <person name="Niblett D."/>
            <person name="Odell C."/>
            <person name="Oliver K."/>
            <person name="O'Neil S."/>
            <person name="Pearson D."/>
            <person name="Quail M.A."/>
            <person name="Rabbinowitsch E."/>
            <person name="Rutherford K.M."/>
            <person name="Rutter S."/>
            <person name="Saunders D."/>
            <person name="Seeger K."/>
            <person name="Sharp S."/>
            <person name="Skelton J."/>
            <person name="Simmonds M.N."/>
            <person name="Squares R."/>
            <person name="Squares S."/>
            <person name="Stevens K."/>
            <person name="Taylor K."/>
            <person name="Taylor R.G."/>
            <person name="Tivey A."/>
            <person name="Walsh S.V."/>
            <person name="Warren T."/>
            <person name="Whitehead S."/>
            <person name="Woodward J.R."/>
            <person name="Volckaert G."/>
            <person name="Aert R."/>
            <person name="Robben J."/>
            <person name="Grymonprez B."/>
            <person name="Weltjens I."/>
            <person name="Vanstreels E."/>
            <person name="Rieger M."/>
            <person name="Schaefer M."/>
            <person name="Mueller-Auer S."/>
            <person name="Gabel C."/>
            <person name="Fuchs M."/>
            <person name="Duesterhoeft A."/>
            <person name="Fritzc C."/>
            <person name="Holzer E."/>
            <person name="Moestl D."/>
            <person name="Hilbert H."/>
            <person name="Borzym K."/>
            <person name="Langer I."/>
            <person name="Beck A."/>
            <person name="Lehrach H."/>
            <person name="Reinhardt R."/>
            <person name="Pohl T.M."/>
            <person name="Eger P."/>
            <person name="Zimmermann W."/>
            <person name="Wedler H."/>
            <person name="Wambutt R."/>
            <person name="Purnelle B."/>
            <person name="Goffeau A."/>
            <person name="Cadieu E."/>
            <person name="Dreano S."/>
            <person name="Gloux S."/>
            <person name="Lelaure V."/>
            <person name="Mottier S."/>
            <person name="Galibert F."/>
            <person name="Aves S.J."/>
            <person name="Xiang Z."/>
            <person name="Hunt C."/>
            <person name="Moore K."/>
            <person name="Hurst S.M."/>
            <person name="Lucas M."/>
            <person name="Rochet M."/>
            <person name="Gaillardin C."/>
            <person name="Tallada V.A."/>
            <person name="Garzon A."/>
            <person name="Thode G."/>
            <person name="Daga R.R."/>
            <person name="Cruzado L."/>
            <person name="Jimenez J."/>
            <person name="Sanchez M."/>
            <person name="del Rey F."/>
            <person name="Benito J."/>
            <person name="Dominguez A."/>
            <person name="Revuelta J.L."/>
            <person name="Moreno S."/>
            <person name="Armstrong J."/>
            <person name="Forsburg S.L."/>
            <person name="Cerutti L."/>
            <person name="Lowe T."/>
            <person name="McCombie W.R."/>
            <person name="Paulsen I."/>
            <person name="Potashkin J."/>
            <person name="Shpakovski G.V."/>
            <person name="Ussery D."/>
            <person name="Barrell B.G."/>
            <person name="Nurse P."/>
        </authorList>
    </citation>
    <scope>NUCLEOTIDE SEQUENCE [LARGE SCALE GENOMIC DNA]</scope>
    <source>
        <strain>972 / ATCC 24843</strain>
    </source>
</reference>
<accession>Q9Y6Z9</accession>
<proteinExistence type="inferred from homology"/>
<gene>
    <name type="primary">sou1</name>
    <name type="ORF">SPAC8E11.10</name>
</gene>
<evidence type="ECO:0000250" key="1"/>
<evidence type="ECO:0000250" key="2">
    <source>
        <dbReference type="UniProtKB" id="L0E2Z4"/>
    </source>
</evidence>
<evidence type="ECO:0000250" key="3">
    <source>
        <dbReference type="UniProtKB" id="O93868"/>
    </source>
</evidence>
<evidence type="ECO:0000305" key="4"/>
<dbReference type="EC" id="1.1.1.289"/>
<dbReference type="EMBL" id="CU329670">
    <property type="protein sequence ID" value="CAB40197.1"/>
    <property type="molecule type" value="Genomic_DNA"/>
</dbReference>
<dbReference type="PIR" id="T39164">
    <property type="entry name" value="T39164"/>
</dbReference>
<dbReference type="RefSeq" id="NP_594161.1">
    <property type="nucleotide sequence ID" value="NM_001019585.2"/>
</dbReference>
<dbReference type="SMR" id="Q9Y6Z9"/>
<dbReference type="BioGRID" id="279848">
    <property type="interactions" value="1"/>
</dbReference>
<dbReference type="FunCoup" id="Q9Y6Z9">
    <property type="interactions" value="50"/>
</dbReference>
<dbReference type="STRING" id="284812.Q9Y6Z9"/>
<dbReference type="iPTMnet" id="Q9Y6Z9"/>
<dbReference type="PaxDb" id="4896-SPAC8E11.10.1"/>
<dbReference type="EnsemblFungi" id="SPAC8E11.10.1">
    <property type="protein sequence ID" value="SPAC8E11.10.1:pep"/>
    <property type="gene ID" value="SPAC8E11.10"/>
</dbReference>
<dbReference type="KEGG" id="spo:2543428"/>
<dbReference type="PomBase" id="SPAC8E11.10"/>
<dbReference type="VEuPathDB" id="FungiDB:SPAC8E11.10"/>
<dbReference type="eggNOG" id="KOG0725">
    <property type="taxonomic scope" value="Eukaryota"/>
</dbReference>
<dbReference type="HOGENOM" id="CLU_010194_1_1_1"/>
<dbReference type="InParanoid" id="Q9Y6Z9"/>
<dbReference type="OMA" id="WAPKVRI"/>
<dbReference type="PhylomeDB" id="Q9Y6Z9"/>
<dbReference type="PRO" id="PR:Q9Y6Z9"/>
<dbReference type="Proteomes" id="UP000002485">
    <property type="component" value="Chromosome I"/>
</dbReference>
<dbReference type="GO" id="GO:0005739">
    <property type="term" value="C:mitochondrion"/>
    <property type="evidence" value="ECO:0007005"/>
    <property type="project" value="PomBase"/>
</dbReference>
<dbReference type="GO" id="GO:0016616">
    <property type="term" value="F:oxidoreductase activity, acting on the CH-OH group of donors, NAD or NADP as acceptor"/>
    <property type="evidence" value="ECO:0000318"/>
    <property type="project" value="GO_Central"/>
</dbReference>
<dbReference type="GO" id="GO:0032115">
    <property type="term" value="F:sorbose reductase activity"/>
    <property type="evidence" value="ECO:0007669"/>
    <property type="project" value="UniProtKB-EC"/>
</dbReference>
<dbReference type="CDD" id="cd05352">
    <property type="entry name" value="MDH-like_SDR_c"/>
    <property type="match status" value="1"/>
</dbReference>
<dbReference type="FunFam" id="3.40.50.720:FF:000090">
    <property type="entry name" value="NADP-dependent mannitol dehydrogenase"/>
    <property type="match status" value="1"/>
</dbReference>
<dbReference type="Gene3D" id="3.40.50.720">
    <property type="entry name" value="NAD(P)-binding Rossmann-like Domain"/>
    <property type="match status" value="1"/>
</dbReference>
<dbReference type="InterPro" id="IPR036291">
    <property type="entry name" value="NAD(P)-bd_dom_sf"/>
</dbReference>
<dbReference type="InterPro" id="IPR002347">
    <property type="entry name" value="SDR_fam"/>
</dbReference>
<dbReference type="PANTHER" id="PTHR43008">
    <property type="entry name" value="BENZIL REDUCTASE"/>
    <property type="match status" value="1"/>
</dbReference>
<dbReference type="PANTHER" id="PTHR43008:SF13">
    <property type="entry name" value="L-XYLULOSE REDUCTASE-RELATED"/>
    <property type="match status" value="1"/>
</dbReference>
<dbReference type="Pfam" id="PF13561">
    <property type="entry name" value="adh_short_C2"/>
    <property type="match status" value="1"/>
</dbReference>
<dbReference type="PRINTS" id="PR00081">
    <property type="entry name" value="GDHRDH"/>
</dbReference>
<dbReference type="PRINTS" id="PR00080">
    <property type="entry name" value="SDRFAMILY"/>
</dbReference>
<dbReference type="SUPFAM" id="SSF51735">
    <property type="entry name" value="NAD(P)-binding Rossmann-fold domains"/>
    <property type="match status" value="1"/>
</dbReference>
<name>SOU1_SCHPO</name>
<organism>
    <name type="scientific">Schizosaccharomyces pombe (strain 972 / ATCC 24843)</name>
    <name type="common">Fission yeast</name>
    <dbReference type="NCBI Taxonomy" id="284812"/>
    <lineage>
        <taxon>Eukaryota</taxon>
        <taxon>Fungi</taxon>
        <taxon>Dikarya</taxon>
        <taxon>Ascomycota</taxon>
        <taxon>Taphrinomycotina</taxon>
        <taxon>Schizosaccharomycetes</taxon>
        <taxon>Schizosaccharomycetales</taxon>
        <taxon>Schizosaccharomycetaceae</taxon>
        <taxon>Schizosaccharomyces</taxon>
    </lineage>
</organism>
<comment type="function">
    <text evidence="1">Catalyzes the NADP dependent reduction of L-sorbose to D-glucitol.</text>
</comment>
<comment type="catalytic activity">
    <reaction>
        <text>D-sorbitol + NADP(+) = keto-L-sorbose + NADPH + H(+)</text>
        <dbReference type="Rhea" id="RHEA:14609"/>
        <dbReference type="ChEBI" id="CHEBI:13172"/>
        <dbReference type="ChEBI" id="CHEBI:15378"/>
        <dbReference type="ChEBI" id="CHEBI:17924"/>
        <dbReference type="ChEBI" id="CHEBI:57783"/>
        <dbReference type="ChEBI" id="CHEBI:58349"/>
        <dbReference type="EC" id="1.1.1.289"/>
    </reaction>
</comment>
<comment type="similarity">
    <text evidence="4">Belongs to the short-chain dehydrogenases/reductases (SDR) family.</text>
</comment>
<sequence length="255" mass="27437">MTSMFSLKGKTTLITGGSGGIGFSIAKAFAAAGSNVGLLYGRNKKALEYAAELRDKHGVQAKAYSCPIENRSAVIETTNQAVEELGGRLDVMIANAGIAIPHLSLEDKNEDIWTKVVGINLNGAYYTAQAAGHHFKKQGKGSLIFTASMSGHIANWPQQWASYHATKAAVKHLARALAVEWAPFARVNSVSPGYIDTDLTLYADENLRKKWKEYTPQARIGLPDELPGAYLYLASDASSYCTGSDIIVDGGYCSR</sequence>